<gene>
    <name evidence="1" type="primary">rpmB</name>
    <name type="ordered locus">Amuc_1189</name>
</gene>
<name>RL28_AKKM8</name>
<feature type="chain" id="PRO_1000121575" description="Large ribosomal subunit protein bL28">
    <location>
        <begin position="1"/>
        <end position="87"/>
    </location>
</feature>
<accession>B2URC9</accession>
<evidence type="ECO:0000255" key="1">
    <source>
        <dbReference type="HAMAP-Rule" id="MF_00373"/>
    </source>
</evidence>
<evidence type="ECO:0000305" key="2"/>
<protein>
    <recommendedName>
        <fullName evidence="1">Large ribosomal subunit protein bL28</fullName>
    </recommendedName>
    <alternativeName>
        <fullName evidence="2">50S ribosomal protein L28</fullName>
    </alternativeName>
</protein>
<sequence length="87" mass="9848">MSRICIIRGTMPHKGRRIHRSGLAKKKGGIGRHVTKTVNRTVFPNLQEKRIWVPELGQFVKMKISAKALRTINKNGAYNTLKKVGLL</sequence>
<organism>
    <name type="scientific">Akkermansia muciniphila (strain ATCC BAA-835 / DSM 22959 / JCM 33894 / BCRC 81048 / CCUG 64013 / CIP 107961 / Muc)</name>
    <dbReference type="NCBI Taxonomy" id="349741"/>
    <lineage>
        <taxon>Bacteria</taxon>
        <taxon>Pseudomonadati</taxon>
        <taxon>Verrucomicrobiota</taxon>
        <taxon>Verrucomicrobiia</taxon>
        <taxon>Verrucomicrobiales</taxon>
        <taxon>Akkermansiaceae</taxon>
        <taxon>Akkermansia</taxon>
    </lineage>
</organism>
<proteinExistence type="inferred from homology"/>
<keyword id="KW-1185">Reference proteome</keyword>
<keyword id="KW-0687">Ribonucleoprotein</keyword>
<keyword id="KW-0689">Ribosomal protein</keyword>
<comment type="similarity">
    <text evidence="1">Belongs to the bacterial ribosomal protein bL28 family.</text>
</comment>
<dbReference type="EMBL" id="CP001071">
    <property type="protein sequence ID" value="ACD05014.1"/>
    <property type="molecule type" value="Genomic_DNA"/>
</dbReference>
<dbReference type="RefSeq" id="WP_012420229.1">
    <property type="nucleotide sequence ID" value="NZ_CP071807.1"/>
</dbReference>
<dbReference type="SMR" id="B2URC9"/>
<dbReference type="STRING" id="349741.Amuc_1189"/>
<dbReference type="PaxDb" id="349741-Amuc_1189"/>
<dbReference type="GeneID" id="86960760"/>
<dbReference type="KEGG" id="amu:Amuc_1189"/>
<dbReference type="eggNOG" id="COG0227">
    <property type="taxonomic scope" value="Bacteria"/>
</dbReference>
<dbReference type="HOGENOM" id="CLU_064548_3_2_0"/>
<dbReference type="OrthoDB" id="9801582at2"/>
<dbReference type="BioCyc" id="AMUC349741:G1GBX-1266-MONOMER"/>
<dbReference type="Proteomes" id="UP000001031">
    <property type="component" value="Chromosome"/>
</dbReference>
<dbReference type="GO" id="GO:1990904">
    <property type="term" value="C:ribonucleoprotein complex"/>
    <property type="evidence" value="ECO:0007669"/>
    <property type="project" value="UniProtKB-KW"/>
</dbReference>
<dbReference type="GO" id="GO:0005840">
    <property type="term" value="C:ribosome"/>
    <property type="evidence" value="ECO:0007669"/>
    <property type="project" value="UniProtKB-KW"/>
</dbReference>
<dbReference type="GO" id="GO:0003735">
    <property type="term" value="F:structural constituent of ribosome"/>
    <property type="evidence" value="ECO:0007669"/>
    <property type="project" value="InterPro"/>
</dbReference>
<dbReference type="GO" id="GO:0006412">
    <property type="term" value="P:translation"/>
    <property type="evidence" value="ECO:0007669"/>
    <property type="project" value="UniProtKB-UniRule"/>
</dbReference>
<dbReference type="Gene3D" id="2.30.170.40">
    <property type="entry name" value="Ribosomal protein L28/L24"/>
    <property type="match status" value="1"/>
</dbReference>
<dbReference type="HAMAP" id="MF_00373">
    <property type="entry name" value="Ribosomal_bL28"/>
    <property type="match status" value="1"/>
</dbReference>
<dbReference type="InterPro" id="IPR026569">
    <property type="entry name" value="Ribosomal_bL28"/>
</dbReference>
<dbReference type="InterPro" id="IPR034704">
    <property type="entry name" value="Ribosomal_bL28/bL31-like_sf"/>
</dbReference>
<dbReference type="InterPro" id="IPR001383">
    <property type="entry name" value="Ribosomal_bL28_bact-type"/>
</dbReference>
<dbReference type="InterPro" id="IPR037147">
    <property type="entry name" value="Ribosomal_bL28_sf"/>
</dbReference>
<dbReference type="NCBIfam" id="TIGR00009">
    <property type="entry name" value="L28"/>
    <property type="match status" value="1"/>
</dbReference>
<dbReference type="PANTHER" id="PTHR13528">
    <property type="entry name" value="39S RIBOSOMAL PROTEIN L28, MITOCHONDRIAL"/>
    <property type="match status" value="1"/>
</dbReference>
<dbReference type="PANTHER" id="PTHR13528:SF2">
    <property type="entry name" value="LARGE RIBOSOMAL SUBUNIT PROTEIN BL28M"/>
    <property type="match status" value="1"/>
</dbReference>
<dbReference type="Pfam" id="PF00830">
    <property type="entry name" value="Ribosomal_L28"/>
    <property type="match status" value="1"/>
</dbReference>
<dbReference type="SUPFAM" id="SSF143800">
    <property type="entry name" value="L28p-like"/>
    <property type="match status" value="1"/>
</dbReference>
<reference key="1">
    <citation type="journal article" date="2011" name="PLoS ONE">
        <title>The genome of Akkermansia muciniphila, a dedicated intestinal mucin degrader, and its use in exploring intestinal metagenomes.</title>
        <authorList>
            <person name="van Passel M.W."/>
            <person name="Kant R."/>
            <person name="Zoetendal E.G."/>
            <person name="Plugge C.M."/>
            <person name="Derrien M."/>
            <person name="Malfatti S.A."/>
            <person name="Chain P.S."/>
            <person name="Woyke T."/>
            <person name="Palva A."/>
            <person name="de Vos W.M."/>
            <person name="Smidt H."/>
        </authorList>
    </citation>
    <scope>NUCLEOTIDE SEQUENCE [LARGE SCALE GENOMIC DNA]</scope>
    <source>
        <strain>ATCC BAA-835 / DSM 22959 / JCM 33894 / BCRC 81048 / CCUG 64013 / CIP 107961 / Muc</strain>
    </source>
</reference>